<sequence length="843" mass="96390">MREEEMESSSEGETNKISRCKATGSDNPDEDYVEITLEVRDETINTMKAKATLRSVLSGRLKTMVKSLSFASRRLDRSKSFGAMFALRGLRFIAKNDAVGRGWDEVAMRFDKLAVEGKLPKSKFGHCIGMVESSEFVNELFEALVRRRGTTSSSITKTELFEFWEQITGNSFDDRLQIFFDMVDKNLDGRITGDEVKEIIALSASANKLSKIKENVDEYAALIMEELDRDNLGYIELHNLETLLLQVPSQSNNSPSSANKRALNKMLSQKLIPTKDRNPVKRFAMNISYFFLENWKRIWVLTLWISICITLFTWKFLQYKRKTVFEVMGYCVTVAKGSAETLKFNMALILLPVCRNTITWLRTKSKLIGSVVPFDDNINFHKVVAFGIAVGIGLHAISHLACDFPRLLHAKNVEFEPMKKFFGDERPENYGWFMKGTDGWTGVTMVVLMLVAYVLAQSWFRRNRANLPKSLKRLTGFNAFWYSHHLFVIVYVLLIVHGYFVYLSKEWYHKTTWMYLAVPVLLYAFERLIRAFRPGAKAVKVLKVAVYPGNVLSLYMSKPKGFKYTSGQYIYINCSDVSPLQWHPFSITSASGDDYLSVHIRTLGDWTSQLKSLYSKVCQLPSTSQSGLFIADIGQANNITRFPRLLIDGPYGAPAQDYRNYDVLLLVGLGIGATPLISIIRDVLNNIKNQNSIERGTNQHIKNYVATKRAYFYWVTREQGSLEWFSEVMNEVAEYDSEGMIELHNYCTSVYEEGDARSALITMLQSLHHAKSGIDIVSGTRVRTHFARPNWRSVFKHVAVNHVNQRVGVFYCGNTCIIGELKRLAQDFSRKTTTKFEFHKENF</sequence>
<accession>Q9SBI0</accession>
<accession>O04020</accession>
<accession>O04021</accession>
<accession>Q84TJ9</accession>
<feature type="chain" id="PRO_0000313754" description="Respiratory burst oxidase homolog protein B">
    <location>
        <begin position="1"/>
        <end position="843"/>
    </location>
</feature>
<feature type="topological domain" description="Cytoplasmic" evidence="3">
    <location>
        <begin position="1"/>
        <end position="297"/>
    </location>
</feature>
<feature type="transmembrane region" description="Helical; Name=1" evidence="3">
    <location>
        <begin position="298"/>
        <end position="318"/>
    </location>
</feature>
<feature type="topological domain" description="Extracellular" evidence="3">
    <location>
        <begin position="319"/>
        <end position="383"/>
    </location>
</feature>
<feature type="transmembrane region" description="Helical; Name=2" evidence="3">
    <location>
        <begin position="384"/>
        <end position="404"/>
    </location>
</feature>
<feature type="topological domain" description="Cytoplasmic" evidence="3">
    <location>
        <begin position="405"/>
        <end position="439"/>
    </location>
</feature>
<feature type="transmembrane region" description="Helical; Name=3" evidence="3">
    <location>
        <begin position="440"/>
        <end position="460"/>
    </location>
</feature>
<feature type="topological domain" description="Extracellular" evidence="3">
    <location>
        <begin position="461"/>
        <end position="482"/>
    </location>
</feature>
<feature type="transmembrane region" description="Helical; Name=4" evidence="3">
    <location>
        <begin position="483"/>
        <end position="503"/>
    </location>
</feature>
<feature type="topological domain" description="Cytoplasmic" evidence="3">
    <location>
        <begin position="504"/>
        <end position="511"/>
    </location>
</feature>
<feature type="transmembrane region" description="Helical; Name=5" evidence="3">
    <location>
        <begin position="512"/>
        <end position="529"/>
    </location>
</feature>
<feature type="topological domain" description="Extracellular" evidence="3">
    <location>
        <begin position="530"/>
        <end position="659"/>
    </location>
</feature>
<feature type="transmembrane region" description="Helical; Name=6" evidence="3">
    <location>
        <begin position="660"/>
        <end position="680"/>
    </location>
</feature>
<feature type="topological domain" description="Cytoplasmic" evidence="3">
    <location>
        <begin position="681"/>
        <end position="843"/>
    </location>
</feature>
<feature type="domain" description="EF-hand 1" evidence="4">
    <location>
        <begin position="171"/>
        <end position="206"/>
    </location>
</feature>
<feature type="domain" description="EF-hand 2" evidence="4">
    <location>
        <begin position="215"/>
        <end position="250"/>
    </location>
</feature>
<feature type="domain" description="Ferric oxidoreductase">
    <location>
        <begin position="336"/>
        <end position="495"/>
    </location>
</feature>
<feature type="domain" description="FAD-binding FR-type" evidence="5">
    <location>
        <begin position="534"/>
        <end position="657"/>
    </location>
</feature>
<feature type="region of interest" description="Disordered" evidence="6">
    <location>
        <begin position="1"/>
        <end position="27"/>
    </location>
</feature>
<feature type="region of interest" description="EF-hand-like 1" evidence="1">
    <location>
        <begin position="114"/>
        <end position="122"/>
    </location>
</feature>
<feature type="region of interest" description="EF-hand-like 2" evidence="1">
    <location>
        <begin position="148"/>
        <end position="159"/>
    </location>
</feature>
<feature type="compositionally biased region" description="Acidic residues" evidence="6">
    <location>
        <begin position="1"/>
        <end position="10"/>
    </location>
</feature>
<feature type="binding site" evidence="1">
    <location>
        <position position="184"/>
    </location>
    <ligand>
        <name>Ca(2+)</name>
        <dbReference type="ChEBI" id="CHEBI:29108"/>
    </ligand>
</feature>
<feature type="binding site" evidence="1">
    <location>
        <position position="186"/>
    </location>
    <ligand>
        <name>Ca(2+)</name>
        <dbReference type="ChEBI" id="CHEBI:29108"/>
    </ligand>
</feature>
<feature type="binding site" evidence="1">
    <location>
        <position position="188"/>
    </location>
    <ligand>
        <name>Ca(2+)</name>
        <dbReference type="ChEBI" id="CHEBI:29108"/>
    </ligand>
</feature>
<feature type="binding site" evidence="1">
    <location>
        <position position="190"/>
    </location>
    <ligand>
        <name>Ca(2+)</name>
        <dbReference type="ChEBI" id="CHEBI:29108"/>
    </ligand>
</feature>
<feature type="binding site" evidence="1">
    <location>
        <position position="195"/>
    </location>
    <ligand>
        <name>Ca(2+)</name>
        <dbReference type="ChEBI" id="CHEBI:29108"/>
    </ligand>
</feature>
<feature type="modified residue" description="Phosphoserine" evidence="2">
    <location>
        <position position="268"/>
    </location>
</feature>
<feature type="splice variant" id="VSP_030130" description="In isoform 2." evidence="7">
    <original>CQLP</original>
    <variation>TIFQ</variation>
    <location>
        <begin position="618"/>
        <end position="621"/>
    </location>
</feature>
<feature type="splice variant" id="VSP_030131" description="In isoform 2." evidence="7">
    <location>
        <begin position="622"/>
        <end position="843"/>
    </location>
</feature>
<protein>
    <recommendedName>
        <fullName>Respiratory burst oxidase homolog protein B</fullName>
        <ecNumber>1.11.1.-</ecNumber>
        <ecNumber>1.6.3.-</ecNumber>
    </recommendedName>
    <alternativeName>
        <fullName>NADPH oxidase RBOHB</fullName>
        <shortName>AtRBOHB</shortName>
    </alternativeName>
</protein>
<name>RBOHB_ARATH</name>
<keyword id="KW-0025">Alternative splicing</keyword>
<keyword id="KW-0106">Calcium</keyword>
<keyword id="KW-0274">FAD</keyword>
<keyword id="KW-0285">Flavoprotein</keyword>
<keyword id="KW-0472">Membrane</keyword>
<keyword id="KW-0479">Metal-binding</keyword>
<keyword id="KW-0521">NADP</keyword>
<keyword id="KW-0560">Oxidoreductase</keyword>
<keyword id="KW-0575">Peroxidase</keyword>
<keyword id="KW-0597">Phosphoprotein</keyword>
<keyword id="KW-1185">Reference proteome</keyword>
<keyword id="KW-0677">Repeat</keyword>
<keyword id="KW-0812">Transmembrane</keyword>
<keyword id="KW-1133">Transmembrane helix</keyword>
<proteinExistence type="evidence at transcript level"/>
<comment type="function">
    <text>Calcium-dependent NADPH oxidase that generates superoxide.</text>
</comment>
<comment type="subunit">
    <text evidence="1">Monomer and homodimer.</text>
</comment>
<comment type="subcellular location">
    <subcellularLocation>
        <location evidence="8">Membrane</location>
        <topology evidence="8">Multi-pass membrane protein</topology>
    </subcellularLocation>
</comment>
<comment type="alternative products">
    <event type="alternative splicing"/>
    <isoform>
        <id>Q9SBI0-1</id>
        <name>1</name>
        <sequence type="displayed"/>
    </isoform>
    <isoform>
        <id>Q9SBI0-2</id>
        <name>2</name>
        <sequence type="described" ref="VSP_030130 VSP_030131"/>
    </isoform>
</comment>
<comment type="similarity">
    <text evidence="8">Belongs to the RBOH (TC 5.B.1.3) family.</text>
</comment>
<comment type="sequence caution" evidence="8">
    <conflict type="erroneous gene model prediction">
        <sequence resource="EMBL-CDS" id="AAB70398"/>
    </conflict>
</comment>
<comment type="sequence caution" evidence="8">
    <conflict type="erroneous gene model prediction">
        <sequence resource="EMBL-CDS" id="AAB70399"/>
    </conflict>
</comment>
<evidence type="ECO:0000250" key="1"/>
<evidence type="ECO:0000250" key="2">
    <source>
        <dbReference type="UniProtKB" id="Q9FIJ0"/>
    </source>
</evidence>
<evidence type="ECO:0000255" key="3"/>
<evidence type="ECO:0000255" key="4">
    <source>
        <dbReference type="PROSITE-ProRule" id="PRU00448"/>
    </source>
</evidence>
<evidence type="ECO:0000255" key="5">
    <source>
        <dbReference type="PROSITE-ProRule" id="PRU00716"/>
    </source>
</evidence>
<evidence type="ECO:0000256" key="6">
    <source>
        <dbReference type="SAM" id="MobiDB-lite"/>
    </source>
</evidence>
<evidence type="ECO:0000303" key="7">
    <source>
    </source>
</evidence>
<evidence type="ECO:0000305" key="8"/>
<gene>
    <name type="primary">RBOHB</name>
    <name type="ordered locus">At1g09090</name>
    <name type="ORF">F7G19.3</name>
    <name type="ORF">F7G19.4</name>
</gene>
<organism>
    <name type="scientific">Arabidopsis thaliana</name>
    <name type="common">Mouse-ear cress</name>
    <dbReference type="NCBI Taxonomy" id="3702"/>
    <lineage>
        <taxon>Eukaryota</taxon>
        <taxon>Viridiplantae</taxon>
        <taxon>Streptophyta</taxon>
        <taxon>Embryophyta</taxon>
        <taxon>Tracheophyta</taxon>
        <taxon>Spermatophyta</taxon>
        <taxon>Magnoliopsida</taxon>
        <taxon>eudicotyledons</taxon>
        <taxon>Gunneridae</taxon>
        <taxon>Pentapetalae</taxon>
        <taxon>rosids</taxon>
        <taxon>malvids</taxon>
        <taxon>Brassicales</taxon>
        <taxon>Brassicaceae</taxon>
        <taxon>Camelineae</taxon>
        <taxon>Arabidopsis</taxon>
    </lineage>
</organism>
<reference key="1">
    <citation type="journal article" date="1998" name="Plant J.">
        <title>Six Arabidopsis thaliana homologues of the human respiratory burst oxidase (gp91phox).</title>
        <authorList>
            <person name="Torres M.A."/>
            <person name="Onouchi H."/>
            <person name="Hamada S."/>
            <person name="Machida C."/>
            <person name="Hammond-Kosack K.E."/>
            <person name="Jones J.D.G."/>
        </authorList>
    </citation>
    <scope>NUCLEOTIDE SEQUENCE [GENOMIC DNA]</scope>
    <source>
        <strain>cv. Landsberg erecta</strain>
    </source>
</reference>
<reference key="2">
    <citation type="journal article" date="2000" name="Nature">
        <title>Sequence and analysis of chromosome 1 of the plant Arabidopsis thaliana.</title>
        <authorList>
            <person name="Theologis A."/>
            <person name="Ecker J.R."/>
            <person name="Palm C.J."/>
            <person name="Federspiel N.A."/>
            <person name="Kaul S."/>
            <person name="White O."/>
            <person name="Alonso J."/>
            <person name="Altafi H."/>
            <person name="Araujo R."/>
            <person name="Bowman C.L."/>
            <person name="Brooks S.Y."/>
            <person name="Buehler E."/>
            <person name="Chan A."/>
            <person name="Chao Q."/>
            <person name="Chen H."/>
            <person name="Cheuk R.F."/>
            <person name="Chin C.W."/>
            <person name="Chung M.K."/>
            <person name="Conn L."/>
            <person name="Conway A.B."/>
            <person name="Conway A.R."/>
            <person name="Creasy T.H."/>
            <person name="Dewar K."/>
            <person name="Dunn P."/>
            <person name="Etgu P."/>
            <person name="Feldblyum T.V."/>
            <person name="Feng J.-D."/>
            <person name="Fong B."/>
            <person name="Fujii C.Y."/>
            <person name="Gill J.E."/>
            <person name="Goldsmith A.D."/>
            <person name="Haas B."/>
            <person name="Hansen N.F."/>
            <person name="Hughes B."/>
            <person name="Huizar L."/>
            <person name="Hunter J.L."/>
            <person name="Jenkins J."/>
            <person name="Johnson-Hopson C."/>
            <person name="Khan S."/>
            <person name="Khaykin E."/>
            <person name="Kim C.J."/>
            <person name="Koo H.L."/>
            <person name="Kremenetskaia I."/>
            <person name="Kurtz D.B."/>
            <person name="Kwan A."/>
            <person name="Lam B."/>
            <person name="Langin-Hooper S."/>
            <person name="Lee A."/>
            <person name="Lee J.M."/>
            <person name="Lenz C.A."/>
            <person name="Li J.H."/>
            <person name="Li Y.-P."/>
            <person name="Lin X."/>
            <person name="Liu S.X."/>
            <person name="Liu Z.A."/>
            <person name="Luros J.S."/>
            <person name="Maiti R."/>
            <person name="Marziali A."/>
            <person name="Militscher J."/>
            <person name="Miranda M."/>
            <person name="Nguyen M."/>
            <person name="Nierman W.C."/>
            <person name="Osborne B.I."/>
            <person name="Pai G."/>
            <person name="Peterson J."/>
            <person name="Pham P.K."/>
            <person name="Rizzo M."/>
            <person name="Rooney T."/>
            <person name="Rowley D."/>
            <person name="Sakano H."/>
            <person name="Salzberg S.L."/>
            <person name="Schwartz J.R."/>
            <person name="Shinn P."/>
            <person name="Southwick A.M."/>
            <person name="Sun H."/>
            <person name="Tallon L.J."/>
            <person name="Tambunga G."/>
            <person name="Toriumi M.J."/>
            <person name="Town C.D."/>
            <person name="Utterback T."/>
            <person name="Van Aken S."/>
            <person name="Vaysberg M."/>
            <person name="Vysotskaia V.S."/>
            <person name="Walker M."/>
            <person name="Wu D."/>
            <person name="Yu G."/>
            <person name="Fraser C.M."/>
            <person name="Venter J.C."/>
            <person name="Davis R.W."/>
        </authorList>
    </citation>
    <scope>NUCLEOTIDE SEQUENCE [LARGE SCALE GENOMIC DNA]</scope>
    <source>
        <strain>cv. Columbia</strain>
    </source>
</reference>
<reference key="3">
    <citation type="journal article" date="2017" name="Plant J.">
        <title>Araport11: a complete reannotation of the Arabidopsis thaliana reference genome.</title>
        <authorList>
            <person name="Cheng C.Y."/>
            <person name="Krishnakumar V."/>
            <person name="Chan A.P."/>
            <person name="Thibaud-Nissen F."/>
            <person name="Schobel S."/>
            <person name="Town C.D."/>
        </authorList>
    </citation>
    <scope>GENOME REANNOTATION</scope>
    <source>
        <strain>cv. Columbia</strain>
    </source>
</reference>
<reference key="4">
    <citation type="journal article" date="2003" name="Science">
        <title>Empirical analysis of transcriptional activity in the Arabidopsis genome.</title>
        <authorList>
            <person name="Yamada K."/>
            <person name="Lim J."/>
            <person name="Dale J.M."/>
            <person name="Chen H."/>
            <person name="Shinn P."/>
            <person name="Palm C.J."/>
            <person name="Southwick A.M."/>
            <person name="Wu H.C."/>
            <person name="Kim C.J."/>
            <person name="Nguyen M."/>
            <person name="Pham P.K."/>
            <person name="Cheuk R.F."/>
            <person name="Karlin-Newmann G."/>
            <person name="Liu S.X."/>
            <person name="Lam B."/>
            <person name="Sakano H."/>
            <person name="Wu T."/>
            <person name="Yu G."/>
            <person name="Miranda M."/>
            <person name="Quach H.L."/>
            <person name="Tripp M."/>
            <person name="Chang C.H."/>
            <person name="Lee J.M."/>
            <person name="Toriumi M.J."/>
            <person name="Chan M.M."/>
            <person name="Tang C.C."/>
            <person name="Onodera C.S."/>
            <person name="Deng J.M."/>
            <person name="Akiyama K."/>
            <person name="Ansari Y."/>
            <person name="Arakawa T."/>
            <person name="Banh J."/>
            <person name="Banno F."/>
            <person name="Bowser L."/>
            <person name="Brooks S.Y."/>
            <person name="Carninci P."/>
            <person name="Chao Q."/>
            <person name="Choy N."/>
            <person name="Enju A."/>
            <person name="Goldsmith A.D."/>
            <person name="Gurjal M."/>
            <person name="Hansen N.F."/>
            <person name="Hayashizaki Y."/>
            <person name="Johnson-Hopson C."/>
            <person name="Hsuan V.W."/>
            <person name="Iida K."/>
            <person name="Karnes M."/>
            <person name="Khan S."/>
            <person name="Koesema E."/>
            <person name="Ishida J."/>
            <person name="Jiang P.X."/>
            <person name="Jones T."/>
            <person name="Kawai J."/>
            <person name="Kamiya A."/>
            <person name="Meyers C."/>
            <person name="Nakajima M."/>
            <person name="Narusaka M."/>
            <person name="Seki M."/>
            <person name="Sakurai T."/>
            <person name="Satou M."/>
            <person name="Tamse R."/>
            <person name="Vaysberg M."/>
            <person name="Wallender E.K."/>
            <person name="Wong C."/>
            <person name="Yamamura Y."/>
            <person name="Yuan S."/>
            <person name="Shinozaki K."/>
            <person name="Davis R.W."/>
            <person name="Theologis A."/>
            <person name="Ecker J.R."/>
        </authorList>
    </citation>
    <scope>NUCLEOTIDE SEQUENCE [LARGE SCALE MRNA] (ISOFORM 2)</scope>
    <source>
        <strain>cv. Columbia</strain>
    </source>
</reference>
<reference key="5">
    <citation type="journal article" date="1998" name="Plant Cell">
        <title>A plant homolog of the neutrophil NADPH oxidase gp91phox subunit gene encodes a plasma membrane protein with Ca2+ binding motifs.</title>
        <authorList>
            <person name="Keller T."/>
            <person name="Damude H.G."/>
            <person name="Werner D."/>
            <person name="Doerner P."/>
            <person name="Dixon R.A."/>
            <person name="Lamb C."/>
        </authorList>
    </citation>
    <scope>IDENTIFICATION</scope>
</reference>
<reference key="6">
    <citation type="journal article" date="2006" name="Plant Physiol.">
        <title>Production of reactive oxygen species by plant NADPH oxidases.</title>
        <authorList>
            <person name="Sagi M."/>
            <person name="Fluhr R."/>
        </authorList>
    </citation>
    <scope>GENE FAMILY</scope>
    <scope>NOMENCLATURE</scope>
</reference>
<dbReference type="EC" id="1.11.1.-"/>
<dbReference type="EC" id="1.6.3.-"/>
<dbReference type="EMBL" id="AF055354">
    <property type="protein sequence ID" value="AAC39476.1"/>
    <property type="molecule type" value="Genomic_DNA"/>
</dbReference>
<dbReference type="EMBL" id="AC000106">
    <property type="protein sequence ID" value="AAB70398.1"/>
    <property type="status" value="ALT_SEQ"/>
    <property type="molecule type" value="Genomic_DNA"/>
</dbReference>
<dbReference type="EMBL" id="AC000106">
    <property type="protein sequence ID" value="AAB70399.1"/>
    <property type="status" value="ALT_SEQ"/>
    <property type="molecule type" value="Genomic_DNA"/>
</dbReference>
<dbReference type="EMBL" id="CP002684">
    <property type="protein sequence ID" value="AEE28394.1"/>
    <property type="molecule type" value="Genomic_DNA"/>
</dbReference>
<dbReference type="EMBL" id="BT005716">
    <property type="protein sequence ID" value="AAO64136.1"/>
    <property type="molecule type" value="mRNA"/>
</dbReference>
<dbReference type="PIR" id="A86223">
    <property type="entry name" value="A86223"/>
</dbReference>
<dbReference type="PIR" id="B86223">
    <property type="entry name" value="B86223"/>
</dbReference>
<dbReference type="RefSeq" id="NP_172383.3">
    <property type="nucleotide sequence ID" value="NM_100780.3"/>
</dbReference>
<dbReference type="RefSeq" id="NP_973799.1">
    <molecule id="Q9SBI0-1"/>
    <property type="nucleotide sequence ID" value="NM_202070.1"/>
</dbReference>
<dbReference type="SMR" id="Q9SBI0"/>
<dbReference type="FunCoup" id="Q9SBI0">
    <property type="interactions" value="554"/>
</dbReference>
<dbReference type="STRING" id="3702.Q9SBI0"/>
<dbReference type="PeroxiBase" id="3283">
    <property type="entry name" value="AtRboh02"/>
</dbReference>
<dbReference type="GlyGen" id="Q9SBI0">
    <property type="glycosylation" value="1 site"/>
</dbReference>
<dbReference type="iPTMnet" id="Q9SBI0"/>
<dbReference type="PaxDb" id="3702-AT1G09090.2"/>
<dbReference type="ProteomicsDB" id="236525">
    <molecule id="Q9SBI0-1"/>
</dbReference>
<dbReference type="EnsemblPlants" id="AT1G09090.2">
    <molecule id="Q9SBI0-1"/>
    <property type="protein sequence ID" value="AT1G09090.2"/>
    <property type="gene ID" value="AT1G09090"/>
</dbReference>
<dbReference type="GeneID" id="837430"/>
<dbReference type="Gramene" id="AT1G09090.2">
    <molecule id="Q9SBI0-1"/>
    <property type="protein sequence ID" value="AT1G09090.2"/>
    <property type="gene ID" value="AT1G09090"/>
</dbReference>
<dbReference type="KEGG" id="ath:AT1G09090"/>
<dbReference type="Araport" id="AT1G09090"/>
<dbReference type="TAIR" id="AT1G09090">
    <property type="gene designation" value="RBOHB"/>
</dbReference>
<dbReference type="eggNOG" id="KOG0039">
    <property type="taxonomic scope" value="Eukaryota"/>
</dbReference>
<dbReference type="HOGENOM" id="CLU_005646_6_0_1"/>
<dbReference type="InParanoid" id="Q9SBI0"/>
<dbReference type="OMA" id="MEIHENQ"/>
<dbReference type="PhylomeDB" id="Q9SBI0"/>
<dbReference type="BioCyc" id="ARA:AT1G09090-MONOMER"/>
<dbReference type="PRO" id="PR:Q9SBI0"/>
<dbReference type="Proteomes" id="UP000006548">
    <property type="component" value="Chromosome 1"/>
</dbReference>
<dbReference type="ExpressionAtlas" id="Q9SBI0">
    <property type="expression patterns" value="baseline and differential"/>
</dbReference>
<dbReference type="GO" id="GO:0016020">
    <property type="term" value="C:membrane"/>
    <property type="evidence" value="ECO:0007669"/>
    <property type="project" value="UniProtKB-SubCell"/>
</dbReference>
<dbReference type="GO" id="GO:0005509">
    <property type="term" value="F:calcium ion binding"/>
    <property type="evidence" value="ECO:0007669"/>
    <property type="project" value="InterPro"/>
</dbReference>
<dbReference type="GO" id="GO:0016174">
    <property type="term" value="F:NAD(P)H oxidase H2O2-forming activity"/>
    <property type="evidence" value="ECO:0000315"/>
    <property type="project" value="TAIR"/>
</dbReference>
<dbReference type="GO" id="GO:0004601">
    <property type="term" value="F:peroxidase activity"/>
    <property type="evidence" value="ECO:0007669"/>
    <property type="project" value="UniProtKB-KW"/>
</dbReference>
<dbReference type="GO" id="GO:0009408">
    <property type="term" value="P:response to heat"/>
    <property type="evidence" value="ECO:0000315"/>
    <property type="project" value="TAIR"/>
</dbReference>
<dbReference type="GO" id="GO:0009845">
    <property type="term" value="P:seed germination"/>
    <property type="evidence" value="ECO:0000315"/>
    <property type="project" value="TAIR"/>
</dbReference>
<dbReference type="CDD" id="cd06186">
    <property type="entry name" value="NOX_Duox_like_FAD_NADP"/>
    <property type="match status" value="1"/>
</dbReference>
<dbReference type="FunFam" id="1.10.238.10:FF:000049">
    <property type="entry name" value="Respiratory burst oxidase homolog A"/>
    <property type="match status" value="1"/>
</dbReference>
<dbReference type="FunFam" id="2.40.30.10:FF:000019">
    <property type="entry name" value="Respiratory burst oxidase homolog A"/>
    <property type="match status" value="1"/>
</dbReference>
<dbReference type="FunFam" id="3.40.50.80:FF:000007">
    <property type="entry name" value="Respiratory burst oxidase protein A"/>
    <property type="match status" value="1"/>
</dbReference>
<dbReference type="Gene3D" id="1.10.238.10">
    <property type="entry name" value="EF-hand"/>
    <property type="match status" value="1"/>
</dbReference>
<dbReference type="Gene3D" id="3.40.50.80">
    <property type="entry name" value="Nucleotide-binding domain of ferredoxin-NADP reductase (FNR) module"/>
    <property type="match status" value="1"/>
</dbReference>
<dbReference type="Gene3D" id="2.40.30.10">
    <property type="entry name" value="Translation factors"/>
    <property type="match status" value="1"/>
</dbReference>
<dbReference type="InterPro" id="IPR000778">
    <property type="entry name" value="Cyt_b245_heavy_chain"/>
</dbReference>
<dbReference type="InterPro" id="IPR011992">
    <property type="entry name" value="EF-hand-dom_pair"/>
</dbReference>
<dbReference type="InterPro" id="IPR002048">
    <property type="entry name" value="EF_hand_dom"/>
</dbReference>
<dbReference type="InterPro" id="IPR013112">
    <property type="entry name" value="FAD-bd_8"/>
</dbReference>
<dbReference type="InterPro" id="IPR017927">
    <property type="entry name" value="FAD-bd_FR_type"/>
</dbReference>
<dbReference type="InterPro" id="IPR013130">
    <property type="entry name" value="Fe3_Rdtase_TM_dom"/>
</dbReference>
<dbReference type="InterPro" id="IPR013121">
    <property type="entry name" value="Fe_red_NAD-bd_6"/>
</dbReference>
<dbReference type="InterPro" id="IPR039261">
    <property type="entry name" value="FNR_nucleotide-bd"/>
</dbReference>
<dbReference type="InterPro" id="IPR013623">
    <property type="entry name" value="NADPH_Ox"/>
</dbReference>
<dbReference type="InterPro" id="IPR050369">
    <property type="entry name" value="RBOH/FRE"/>
</dbReference>
<dbReference type="InterPro" id="IPR017938">
    <property type="entry name" value="Riboflavin_synthase-like_b-brl"/>
</dbReference>
<dbReference type="PANTHER" id="PTHR11972">
    <property type="entry name" value="NADPH OXIDASE"/>
    <property type="match status" value="1"/>
</dbReference>
<dbReference type="PANTHER" id="PTHR11972:SF64">
    <property type="entry name" value="RESPIRATORY BURST OXIDASE HOMOLOG PROTEIN B"/>
    <property type="match status" value="1"/>
</dbReference>
<dbReference type="Pfam" id="PF08022">
    <property type="entry name" value="FAD_binding_8"/>
    <property type="match status" value="1"/>
</dbReference>
<dbReference type="Pfam" id="PF01794">
    <property type="entry name" value="Ferric_reduct"/>
    <property type="match status" value="1"/>
</dbReference>
<dbReference type="Pfam" id="PF08030">
    <property type="entry name" value="NAD_binding_6"/>
    <property type="match status" value="1"/>
</dbReference>
<dbReference type="Pfam" id="PF08414">
    <property type="entry name" value="NADPH_Ox"/>
    <property type="match status" value="1"/>
</dbReference>
<dbReference type="PRINTS" id="PR00466">
    <property type="entry name" value="GP91PHOX"/>
</dbReference>
<dbReference type="SFLD" id="SFLDG01168">
    <property type="entry name" value="Ferric_reductase_subgroup_(FRE"/>
    <property type="match status" value="1"/>
</dbReference>
<dbReference type="SFLD" id="SFLDG01169">
    <property type="entry name" value="NADPH_oxidase_subgroup_(NOX)"/>
    <property type="match status" value="1"/>
</dbReference>
<dbReference type="SUPFAM" id="SSF47473">
    <property type="entry name" value="EF-hand"/>
    <property type="match status" value="1"/>
</dbReference>
<dbReference type="SUPFAM" id="SSF52343">
    <property type="entry name" value="Ferredoxin reductase-like, C-terminal NADP-linked domain"/>
    <property type="match status" value="1"/>
</dbReference>
<dbReference type="SUPFAM" id="SSF63380">
    <property type="entry name" value="Riboflavin synthase domain-like"/>
    <property type="match status" value="1"/>
</dbReference>
<dbReference type="PROSITE" id="PS50222">
    <property type="entry name" value="EF_HAND_2"/>
    <property type="match status" value="2"/>
</dbReference>
<dbReference type="PROSITE" id="PS51384">
    <property type="entry name" value="FAD_FR"/>
    <property type="match status" value="1"/>
</dbReference>